<comment type="function">
    <text evidence="1">Cell division inhibitor that blocks the formation of polar Z ring septums. Rapidly oscillates between the poles of the cell to destabilize FtsZ filaments that have formed before they mature into polar Z rings. Prevents FtsZ polymerization.</text>
</comment>
<comment type="subunit">
    <text evidence="1">Interacts with MinD and FtsZ.</text>
</comment>
<comment type="similarity">
    <text evidence="1">Belongs to the MinC family.</text>
</comment>
<sequence>MSEQIFELKGNLFTLSVLHLYSTDINLLAEQLYIKIAQAPKFFEGAPIVVNLIEIKNNSLDFVHLKSLLERMSFNAVGVCNGSDEQHTQAKAAGLSVLNYSQDVKSESVKKEPNTSIVEKTVHLPAQIINGTVRSGQQVYAKDRDLVVLGAVSHGAEVIADGNVHIYGTLRGRAIAGAKGFKNAHIFCNRLEAELVSINGNYWISDSLQGEHWGSAVQIQQKNESLEISALVKG</sequence>
<organism>
    <name type="scientific">Pseudoalteromonas translucida (strain TAC 125)</name>
    <dbReference type="NCBI Taxonomy" id="326442"/>
    <lineage>
        <taxon>Bacteria</taxon>
        <taxon>Pseudomonadati</taxon>
        <taxon>Pseudomonadota</taxon>
        <taxon>Gammaproteobacteria</taxon>
        <taxon>Alteromonadales</taxon>
        <taxon>Pseudoalteromonadaceae</taxon>
        <taxon>Pseudoalteromonas</taxon>
    </lineage>
</organism>
<dbReference type="EMBL" id="CR954247">
    <property type="protein sequence ID" value="CAI89544.1"/>
    <property type="molecule type" value="Genomic_DNA"/>
</dbReference>
<dbReference type="SMR" id="Q3ICG0"/>
<dbReference type="STRING" id="326442.PSHAb0507"/>
<dbReference type="KEGG" id="pha:PSHAb0507"/>
<dbReference type="PATRIC" id="fig|326442.8.peg.3415"/>
<dbReference type="eggNOG" id="COG0850">
    <property type="taxonomic scope" value="Bacteria"/>
</dbReference>
<dbReference type="HOGENOM" id="CLU_067812_0_1_6"/>
<dbReference type="BioCyc" id="PHAL326442:PSHA_RS17275-MONOMER"/>
<dbReference type="Proteomes" id="UP000006843">
    <property type="component" value="Chromosome II"/>
</dbReference>
<dbReference type="GO" id="GO:0000902">
    <property type="term" value="P:cell morphogenesis"/>
    <property type="evidence" value="ECO:0007669"/>
    <property type="project" value="InterPro"/>
</dbReference>
<dbReference type="GO" id="GO:0000917">
    <property type="term" value="P:division septum assembly"/>
    <property type="evidence" value="ECO:0007669"/>
    <property type="project" value="UniProtKB-KW"/>
</dbReference>
<dbReference type="GO" id="GO:0051302">
    <property type="term" value="P:regulation of cell division"/>
    <property type="evidence" value="ECO:0007669"/>
    <property type="project" value="InterPro"/>
</dbReference>
<dbReference type="GO" id="GO:1901891">
    <property type="term" value="P:regulation of cell septum assembly"/>
    <property type="evidence" value="ECO:0007669"/>
    <property type="project" value="InterPro"/>
</dbReference>
<dbReference type="Gene3D" id="2.160.20.70">
    <property type="match status" value="1"/>
</dbReference>
<dbReference type="Gene3D" id="3.30.70.260">
    <property type="match status" value="1"/>
</dbReference>
<dbReference type="HAMAP" id="MF_00267">
    <property type="entry name" value="MinC"/>
    <property type="match status" value="1"/>
</dbReference>
<dbReference type="InterPro" id="IPR016098">
    <property type="entry name" value="CAP/MinC_C"/>
</dbReference>
<dbReference type="InterPro" id="IPR013033">
    <property type="entry name" value="MinC"/>
</dbReference>
<dbReference type="InterPro" id="IPR036145">
    <property type="entry name" value="MinC_C_sf"/>
</dbReference>
<dbReference type="InterPro" id="IPR007874">
    <property type="entry name" value="MinC_N"/>
</dbReference>
<dbReference type="InterPro" id="IPR005526">
    <property type="entry name" value="Septum_form_inhib_MinC_C"/>
</dbReference>
<dbReference type="NCBIfam" id="TIGR01222">
    <property type="entry name" value="minC"/>
    <property type="match status" value="1"/>
</dbReference>
<dbReference type="PANTHER" id="PTHR34108">
    <property type="entry name" value="SEPTUM SITE-DETERMINING PROTEIN MINC"/>
    <property type="match status" value="1"/>
</dbReference>
<dbReference type="PANTHER" id="PTHR34108:SF1">
    <property type="entry name" value="SEPTUM SITE-DETERMINING PROTEIN MINC"/>
    <property type="match status" value="1"/>
</dbReference>
<dbReference type="Pfam" id="PF03775">
    <property type="entry name" value="MinC_C"/>
    <property type="match status" value="1"/>
</dbReference>
<dbReference type="Pfam" id="PF05209">
    <property type="entry name" value="MinC_N"/>
    <property type="match status" value="1"/>
</dbReference>
<dbReference type="SUPFAM" id="SSF63848">
    <property type="entry name" value="Cell-division inhibitor MinC, C-terminal domain"/>
    <property type="match status" value="1"/>
</dbReference>
<reference key="1">
    <citation type="journal article" date="2005" name="Genome Res.">
        <title>Coping with cold: the genome of the versatile marine Antarctica bacterium Pseudoalteromonas haloplanktis TAC125.</title>
        <authorList>
            <person name="Medigue C."/>
            <person name="Krin E."/>
            <person name="Pascal G."/>
            <person name="Barbe V."/>
            <person name="Bernsel A."/>
            <person name="Bertin P.N."/>
            <person name="Cheung F."/>
            <person name="Cruveiller S."/>
            <person name="D'Amico S."/>
            <person name="Duilio A."/>
            <person name="Fang G."/>
            <person name="Feller G."/>
            <person name="Ho C."/>
            <person name="Mangenot S."/>
            <person name="Marino G."/>
            <person name="Nilsson J."/>
            <person name="Parrilli E."/>
            <person name="Rocha E.P.C."/>
            <person name="Rouy Z."/>
            <person name="Sekowska A."/>
            <person name="Tutino M.L."/>
            <person name="Vallenet D."/>
            <person name="von Heijne G."/>
            <person name="Danchin A."/>
        </authorList>
    </citation>
    <scope>NUCLEOTIDE SEQUENCE [LARGE SCALE GENOMIC DNA]</scope>
    <source>
        <strain>TAC 125</strain>
    </source>
</reference>
<name>MINC_PSET1</name>
<gene>
    <name evidence="1" type="primary">minC</name>
    <name type="ordered locus">PSHAb0507</name>
</gene>
<protein>
    <recommendedName>
        <fullName evidence="1">Probable septum site-determining protein MinC</fullName>
    </recommendedName>
</protein>
<evidence type="ECO:0000255" key="1">
    <source>
        <dbReference type="HAMAP-Rule" id="MF_00267"/>
    </source>
</evidence>
<feature type="chain" id="PRO_1000047844" description="Probable septum site-determining protein MinC">
    <location>
        <begin position="1"/>
        <end position="234"/>
    </location>
</feature>
<keyword id="KW-0131">Cell cycle</keyword>
<keyword id="KW-0132">Cell division</keyword>
<keyword id="KW-1185">Reference proteome</keyword>
<keyword id="KW-0717">Septation</keyword>
<proteinExistence type="inferred from homology"/>
<accession>Q3ICG0</accession>